<reference key="1">
    <citation type="journal article" date="2004" name="Infect. Immun.">
        <title>Role of siderophore biosynthesis in virulence of Staphylococcus aureus: identification and characterization of genes involved in production of a siderophore.</title>
        <authorList>
            <person name="Dale S.E."/>
            <person name="Doherty-Kirby A."/>
            <person name="Lajoie G."/>
            <person name="Heinrichs D.E."/>
        </authorList>
    </citation>
    <scope>NUCLEOTIDE SEQUENCE [GENOMIC DNA]</scope>
    <scope>INDUCTION</scope>
</reference>
<reference key="2">
    <citation type="book" date="2006" name="Gram positive pathogens, 2nd edition">
        <title>The Staphylococcus aureus NCTC 8325 genome.</title>
        <editorList>
            <person name="Fischetti V."/>
            <person name="Novick R."/>
            <person name="Ferretti J."/>
            <person name="Portnoy D."/>
            <person name="Rood J."/>
        </editorList>
        <authorList>
            <person name="Gillaspy A.F."/>
            <person name="Worrell V."/>
            <person name="Orvis J."/>
            <person name="Roe B.A."/>
            <person name="Dyer D.W."/>
            <person name="Iandolo J.J."/>
        </authorList>
    </citation>
    <scope>NUCLEOTIDE SEQUENCE [LARGE SCALE GENOMIC DNA]</scope>
    <source>
        <strain>NCTC 8325 / PS 47</strain>
    </source>
</reference>
<reference key="3">
    <citation type="journal article" date="2009" name="Mol. Microbiol.">
        <title>Molecular characterization of staphyloferrin B biosynthesis in Staphylococcus aureus.</title>
        <authorList>
            <person name="Cheung J."/>
            <person name="Beasley F.C."/>
            <person name="Liu S."/>
            <person name="Lajoie G.A."/>
            <person name="Heinrichs D.E."/>
        </authorList>
    </citation>
    <scope>FUNCTION</scope>
    <scope>CATALYTIC ACTIVITY</scope>
    <scope>PATHWAY</scope>
    <scope>SUBUNIT</scope>
</reference>
<accession>Q2G1M8</accession>
<accession>Q6X7U2</accession>
<feature type="chain" id="PRO_0000447127" description="2-[(L-alanin-3-ylcarbamoyl)methyl]-3-(2-aminoethylcarbamoyl)-2-hydroxypropanoate synthase">
    <location>
        <begin position="1"/>
        <end position="616"/>
    </location>
</feature>
<comment type="function">
    <text evidence="2">Catalyzes the condensation of L-2,3-diaminopropionic acid (L-Dap) and citryl-diaminoethane to form L-2,3-diaminopropionyl-citryl-diaminoethane, the third step in staphyloferrin B biosynthesis.</text>
</comment>
<comment type="catalytic activity">
    <reaction evidence="2">
        <text>2-[(2-aminoethylcarbamoyl)methyl]-2-hydroxybutanedioate + (S)-2,3-diaminopropanoate + ATP = 2-[(L-alanin-3-ylcarbamoyl)methyl]-3-(2-aminoethylcarbamoyl)-2-hydroxypropanoate + AMP + diphosphate</text>
        <dbReference type="Rhea" id="RHEA:59128"/>
        <dbReference type="ChEBI" id="CHEBI:30616"/>
        <dbReference type="ChEBI" id="CHEBI:33019"/>
        <dbReference type="ChEBI" id="CHEBI:57721"/>
        <dbReference type="ChEBI" id="CHEBI:142970"/>
        <dbReference type="ChEBI" id="CHEBI:142971"/>
        <dbReference type="ChEBI" id="CHEBI:456215"/>
        <dbReference type="EC" id="6.3.2.55"/>
    </reaction>
    <physiologicalReaction direction="left-to-right" evidence="2">
        <dbReference type="Rhea" id="RHEA:59129"/>
    </physiologicalReaction>
</comment>
<comment type="pathway">
    <text evidence="2">Siderophore biosynthesis.</text>
</comment>
<comment type="subunit">
    <text evidence="2">Forms a mixture of monomer and dimer in solution.</text>
</comment>
<comment type="induction">
    <text evidence="1">Up-regulated under iron-deficient growth conditions. Repressed by Fur under iron-rich growth conditions.</text>
</comment>
<comment type="similarity">
    <text evidence="4">Belongs to the IucA/IucC family.</text>
</comment>
<comment type="sequence caution" evidence="4">
    <conflict type="erroneous initiation">
        <sequence resource="EMBL-CDS" id="AAP82068"/>
    </conflict>
    <text>Truncated N-terminus.</text>
</comment>
<protein>
    <recommendedName>
        <fullName evidence="4">2-[(L-alanin-3-ylcarbamoyl)methyl]-3-(2-aminoethylcarbamoyl)-2-hydroxypropanoate synthase</fullName>
        <ecNumber evidence="2">6.3.2.55</ecNumber>
    </recommendedName>
    <alternativeName>
        <fullName evidence="4">Staphyloferrin B biosynthesis protein SbnF</fullName>
    </alternativeName>
</protein>
<organism>
    <name type="scientific">Staphylococcus aureus (strain NCTC 8325 / PS 47)</name>
    <dbReference type="NCBI Taxonomy" id="93061"/>
    <lineage>
        <taxon>Bacteria</taxon>
        <taxon>Bacillati</taxon>
        <taxon>Bacillota</taxon>
        <taxon>Bacilli</taxon>
        <taxon>Bacillales</taxon>
        <taxon>Staphylococcaceae</taxon>
        <taxon>Staphylococcus</taxon>
    </lineage>
</organism>
<sequence>MIVVQTLFIHIYQIQFVITRRYRIVNQTILNRVKTRVMHQLVSSLIYENIVVYKASYQDGVGHFTIEGHDSEYRFTAEKTHSFDRIRITSPIERVVGDEADTTTDYTQLLREVVFTFPKNDEKLEQFIVELLQTELKDTQSMQYRESNPPATPETFNDYEFYAMEGHQYHPSYKSRLGFTLSDNLKFGPDFVPNVKLQWLAIDKDKVETTVSRNVVVNEMLRQQVGDKTYEHFVQQIEASGKHVNDVEMIPVHPWQFEHVIQVDLAEERLNGTVLWLGESDELYHPQQSIRTMSPIDTTKYYLKVPISITNTSTKRVLAPHTIENAAQITDWLKQIQQQDMYLKDELKTVFLGEVLGQSYLNTQLSPYKQTQVYGALGVIWRENIYHMLIDEEDAIPFNALYASDKDGVPFIENWIKQYGSEAWTKQFLAVAIRPMIHMLYYHGIAFESHAQNMMLIHENGWPTRIALKDFHDGVRFKREHLSEAASHLTLKPMPEAHKKVNSNSFIETDDERLVRDFLHDAFFFINIAEIILFIEKQYGIDEELQWQWVKGIIEAYQEAFPELNNYQHFDLFEPTIQVEKLTTRRLLSDSELRIHHVTNPLGVGGINDATTISET</sequence>
<dbReference type="EC" id="6.3.2.55" evidence="2"/>
<dbReference type="EMBL" id="AY251022">
    <property type="protein sequence ID" value="AAP82068.1"/>
    <property type="status" value="ALT_INIT"/>
    <property type="molecule type" value="Genomic_DNA"/>
</dbReference>
<dbReference type="EMBL" id="CP000253">
    <property type="protein sequence ID" value="ABD29263.1"/>
    <property type="molecule type" value="Genomic_DNA"/>
</dbReference>
<dbReference type="RefSeq" id="WP_001795559.1">
    <property type="nucleotide sequence ID" value="NZ_LS483365.1"/>
</dbReference>
<dbReference type="RefSeq" id="YP_498680.1">
    <property type="nucleotide sequence ID" value="NC_007795.1"/>
</dbReference>
<dbReference type="SMR" id="Q2G1M8"/>
<dbReference type="STRING" id="93061.SAOUHSC_00080"/>
<dbReference type="PaxDb" id="1280-SAXN108_0107"/>
<dbReference type="GeneID" id="3919458"/>
<dbReference type="KEGG" id="sao:SAOUHSC_00080"/>
<dbReference type="PATRIC" id="fig|93061.5.peg.69"/>
<dbReference type="eggNOG" id="COG4264">
    <property type="taxonomic scope" value="Bacteria"/>
</dbReference>
<dbReference type="HOGENOM" id="CLU_018524_0_1_9"/>
<dbReference type="OrthoDB" id="495728at2"/>
<dbReference type="BioCyc" id="MetaCyc:G1I0R-74-MONOMER"/>
<dbReference type="BRENDA" id="6.3.2.55">
    <property type="organism ID" value="3352"/>
</dbReference>
<dbReference type="Proteomes" id="UP000008816">
    <property type="component" value="Chromosome"/>
</dbReference>
<dbReference type="GO" id="GO:0016881">
    <property type="term" value="F:acid-amino acid ligase activity"/>
    <property type="evidence" value="ECO:0000314"/>
    <property type="project" value="UniProtKB"/>
</dbReference>
<dbReference type="GO" id="GO:0005524">
    <property type="term" value="F:ATP binding"/>
    <property type="evidence" value="ECO:0007669"/>
    <property type="project" value="UniProtKB-KW"/>
</dbReference>
<dbReference type="GO" id="GO:0019290">
    <property type="term" value="P:siderophore biosynthetic process"/>
    <property type="evidence" value="ECO:0000314"/>
    <property type="project" value="UniProtKB"/>
</dbReference>
<dbReference type="FunFam" id="1.10.510.40:FF:000006">
    <property type="entry name" value="Siderophore biosynthesis protein SbnF"/>
    <property type="match status" value="1"/>
</dbReference>
<dbReference type="Gene3D" id="1.10.510.40">
    <property type="match status" value="1"/>
</dbReference>
<dbReference type="Gene3D" id="3.30.310.280">
    <property type="match status" value="1"/>
</dbReference>
<dbReference type="InterPro" id="IPR007310">
    <property type="entry name" value="Aerobactin_biosyn_IucA/IucC_N"/>
</dbReference>
<dbReference type="InterPro" id="IPR022770">
    <property type="entry name" value="IucA/IucC-like_C"/>
</dbReference>
<dbReference type="InterPro" id="IPR053631">
    <property type="entry name" value="IucA/IucC-like_synthase"/>
</dbReference>
<dbReference type="InterPro" id="IPR037455">
    <property type="entry name" value="LucA/IucC-like"/>
</dbReference>
<dbReference type="NCBIfam" id="NF033586">
    <property type="entry name" value="staphy_B_SbnF"/>
    <property type="match status" value="1"/>
</dbReference>
<dbReference type="PANTHER" id="PTHR34384">
    <property type="entry name" value="L-2,3-DIAMINOPROPANOATE--CITRATE LIGASE"/>
    <property type="match status" value="1"/>
</dbReference>
<dbReference type="PANTHER" id="PTHR34384:SF6">
    <property type="entry name" value="STAPHYLOFERRIN B SYNTHASE"/>
    <property type="match status" value="1"/>
</dbReference>
<dbReference type="Pfam" id="PF06276">
    <property type="entry name" value="FhuF"/>
    <property type="match status" value="1"/>
</dbReference>
<dbReference type="Pfam" id="PF04183">
    <property type="entry name" value="IucA_IucC"/>
    <property type="match status" value="1"/>
</dbReference>
<name>SBNF_STAA8</name>
<proteinExistence type="evidence at protein level"/>
<keyword id="KW-0067">ATP-binding</keyword>
<keyword id="KW-0436">Ligase</keyword>
<keyword id="KW-0547">Nucleotide-binding</keyword>
<keyword id="KW-1185">Reference proteome</keyword>
<evidence type="ECO:0000269" key="1">
    <source>
    </source>
</evidence>
<evidence type="ECO:0000269" key="2">
    <source>
    </source>
</evidence>
<evidence type="ECO:0000303" key="3">
    <source>
    </source>
</evidence>
<evidence type="ECO:0000305" key="4"/>
<evidence type="ECO:0000312" key="5">
    <source>
        <dbReference type="EMBL" id="ABD29263.1"/>
    </source>
</evidence>
<gene>
    <name evidence="3" type="primary">sbnF</name>
    <name evidence="5" type="ordered locus">SAOUHSC_00080</name>
</gene>